<feature type="chain" id="PRO_0000108444" description="Cytochrome c peroxidase Ccp">
    <location>
        <begin position="1"/>
        <end position="465"/>
    </location>
</feature>
<feature type="topological domain" description="Cytoplasmic" evidence="10 11">
    <location>
        <begin position="1"/>
        <end position="6"/>
    </location>
</feature>
<feature type="transmembrane region" description="Helical" evidence="1">
    <location>
        <begin position="7"/>
        <end position="27"/>
    </location>
</feature>
<feature type="topological domain" description="Periplasmic" evidence="9 10 11">
    <location>
        <begin position="28"/>
        <end position="465"/>
    </location>
</feature>
<feature type="domain" description="Cytochrome c 1" evidence="2">
    <location>
        <begin position="42"/>
        <end position="155"/>
    </location>
</feature>
<feature type="domain" description="Cytochrome c 2" evidence="2">
    <location>
        <begin position="185"/>
        <end position="287"/>
    </location>
</feature>
<feature type="domain" description="Cytochrome c 3" evidence="2">
    <location>
        <begin position="337"/>
        <end position="454"/>
    </location>
</feature>
<feature type="binding site" description="covalent" evidence="10">
    <location>
        <position position="59"/>
    </location>
    <ligand>
        <name>heme c</name>
        <dbReference type="ChEBI" id="CHEBI:61717"/>
        <label>1</label>
    </ligand>
</feature>
<feature type="binding site" description="covalent" evidence="10">
    <location>
        <position position="62"/>
    </location>
    <ligand>
        <name>heme c</name>
        <dbReference type="ChEBI" id="CHEBI:61717"/>
        <label>1</label>
    </ligand>
</feature>
<feature type="binding site" description="axial binding residue" evidence="10">
    <location>
        <position position="63"/>
    </location>
    <ligand>
        <name>heme c</name>
        <dbReference type="ChEBI" id="CHEBI:61717"/>
        <label>1</label>
    </ligand>
    <ligandPart>
        <name>Fe</name>
        <dbReference type="ChEBI" id="CHEBI:18248"/>
    </ligandPart>
</feature>
<feature type="binding site" description="axial binding residue" evidence="6 10">
    <location>
        <position position="125"/>
    </location>
    <ligand>
        <name>heme c</name>
        <dbReference type="ChEBI" id="CHEBI:61717"/>
        <label>1</label>
    </ligand>
    <ligandPart>
        <name>Fe</name>
        <dbReference type="ChEBI" id="CHEBI:18248"/>
    </ligandPart>
</feature>
<feature type="binding site" description="covalent" evidence="10">
    <location>
        <position position="207"/>
    </location>
    <ligand>
        <name>heme c</name>
        <dbReference type="ChEBI" id="CHEBI:61717"/>
        <label>2</label>
    </ligand>
</feature>
<feature type="binding site" description="covalent" evidence="10">
    <location>
        <position position="210"/>
    </location>
    <ligand>
        <name>heme c</name>
        <dbReference type="ChEBI" id="CHEBI:61717"/>
        <label>2</label>
    </ligand>
</feature>
<feature type="binding site" description="axial binding residue" evidence="10">
    <location>
        <position position="211"/>
    </location>
    <ligand>
        <name>heme c</name>
        <dbReference type="ChEBI" id="CHEBI:61717"/>
        <label>2</label>
    </ligand>
    <ligandPart>
        <name>Fe</name>
        <dbReference type="ChEBI" id="CHEBI:18248"/>
    </ligandPart>
</feature>
<feature type="binding site" description="covalent" evidence="10">
    <location>
        <position position="351"/>
    </location>
    <ligand>
        <name>heme c</name>
        <dbReference type="ChEBI" id="CHEBI:61717"/>
        <label>3</label>
    </ligand>
</feature>
<feature type="binding site" description="covalent" evidence="10">
    <location>
        <position position="354"/>
    </location>
    <ligand>
        <name>heme c</name>
        <dbReference type="ChEBI" id="CHEBI:61717"/>
        <label>3</label>
    </ligand>
</feature>
<feature type="binding site" description="axial binding residue" evidence="10">
    <location>
        <position position="355"/>
    </location>
    <ligand>
        <name>heme c</name>
        <dbReference type="ChEBI" id="CHEBI:61717"/>
        <label>3</label>
    </ligand>
    <ligandPart>
        <name>Fe</name>
        <dbReference type="ChEBI" id="CHEBI:18248"/>
    </ligandPart>
</feature>
<feature type="binding site" description="axial binding residue" evidence="10">
    <location>
        <position position="429"/>
    </location>
    <ligand>
        <name>heme c</name>
        <dbReference type="ChEBI" id="CHEBI:61717"/>
        <label>3</label>
    </ligand>
    <ligandPart>
        <name>Fe</name>
        <dbReference type="ChEBI" id="CHEBI:18248"/>
    </ligandPart>
</feature>
<feature type="mutagenesis site" description="No change in activity using either ABTS2(-) or hydroquinone as electron donor." evidence="6">
    <original>M</original>
    <variation>A</variation>
    <location>
        <position position="82"/>
    </location>
</feature>
<feature type="mutagenesis site" description="Decrease in activity using either ABTS2(-) or hydroquinone as electron donor. The NT heme is high-spin with a lower reduction potential than in the wild-type. The mutant is thermodynamically more unstable." evidence="6">
    <original>M</original>
    <variation>A</variation>
    <location>
        <position position="125"/>
    </location>
</feature>
<feature type="mutagenesis site" description="No change in activity using either ABTS2(-) or hydroquinone as electron donor." evidence="6">
    <original>H</original>
    <variation>A</variation>
    <location>
        <position position="134"/>
    </location>
</feature>
<accession>P37197</accession>
<accession>Q2M7I0</accession>
<evidence type="ECO:0000255" key="1"/>
<evidence type="ECO:0000255" key="2">
    <source>
        <dbReference type="PROSITE-ProRule" id="PRU00433"/>
    </source>
</evidence>
<evidence type="ECO:0000269" key="3">
    <source>
    </source>
</evidence>
<evidence type="ECO:0000269" key="4">
    <source>
    </source>
</evidence>
<evidence type="ECO:0000269" key="5">
    <source>
    </source>
</evidence>
<evidence type="ECO:0000269" key="6">
    <source>
    </source>
</evidence>
<evidence type="ECO:0000303" key="7">
    <source>
    </source>
</evidence>
<evidence type="ECO:0000303" key="8">
    <source>
    </source>
</evidence>
<evidence type="ECO:0000305" key="9">
    <source>
    </source>
</evidence>
<evidence type="ECO:0000305" key="10">
    <source>
    </source>
</evidence>
<evidence type="ECO:0000305" key="11">
    <source>
    </source>
</evidence>
<reference key="1">
    <citation type="journal article" date="1994" name="Nucleic Acids Res.">
        <title>Analysis of the Escherichia coli genome. V. DNA sequence of the region from 76.0 to 81.5 minutes.</title>
        <authorList>
            <person name="Sofia H.J."/>
            <person name="Burland V."/>
            <person name="Daniels D.L."/>
            <person name="Plunkett G. III"/>
            <person name="Blattner F.R."/>
        </authorList>
    </citation>
    <scope>NUCLEOTIDE SEQUENCE [LARGE SCALE GENOMIC DNA]</scope>
    <source>
        <strain>K12 / MG1655 / ATCC 47076</strain>
    </source>
</reference>
<reference key="2">
    <citation type="journal article" date="1997" name="Science">
        <title>The complete genome sequence of Escherichia coli K-12.</title>
        <authorList>
            <person name="Blattner F.R."/>
            <person name="Plunkett G. III"/>
            <person name="Bloch C.A."/>
            <person name="Perna N.T."/>
            <person name="Burland V."/>
            <person name="Riley M."/>
            <person name="Collado-Vides J."/>
            <person name="Glasner J.D."/>
            <person name="Rode C.K."/>
            <person name="Mayhew G.F."/>
            <person name="Gregor J."/>
            <person name="Davis N.W."/>
            <person name="Kirkpatrick H.A."/>
            <person name="Goeden M.A."/>
            <person name="Rose D.J."/>
            <person name="Mau B."/>
            <person name="Shao Y."/>
        </authorList>
    </citation>
    <scope>NUCLEOTIDE SEQUENCE [LARGE SCALE GENOMIC DNA]</scope>
    <source>
        <strain>K12 / MG1655 / ATCC 47076</strain>
    </source>
</reference>
<reference key="3">
    <citation type="journal article" date="2006" name="Mol. Syst. Biol.">
        <title>Highly accurate genome sequences of Escherichia coli K-12 strains MG1655 and W3110.</title>
        <authorList>
            <person name="Hayashi K."/>
            <person name="Morooka N."/>
            <person name="Yamamoto Y."/>
            <person name="Fujita K."/>
            <person name="Isono K."/>
            <person name="Choi S."/>
            <person name="Ohtsubo E."/>
            <person name="Baba T."/>
            <person name="Wanner B.L."/>
            <person name="Mori H."/>
            <person name="Horiuchi T."/>
        </authorList>
    </citation>
    <scope>NUCLEOTIDE SEQUENCE [LARGE SCALE GENOMIC DNA]</scope>
    <source>
        <strain>K12 / W3110 / ATCC 27325 / DSM 5911</strain>
    </source>
</reference>
<reference key="4">
    <citation type="journal article" date="2007" name="Microbiology">
        <title>The Escherichia coli yhjA gene, encoding a predicted cytochrome c peroxidase, is regulated by FNR and OxyR.</title>
        <authorList>
            <person name="Partridge J.D."/>
            <person name="Poole R.K."/>
            <person name="Green J."/>
        </authorList>
    </citation>
    <scope>FUNCTION IN STRESS RESPONSE</scope>
    <scope>INDUCTION</scope>
    <scope>DISRUPTION PHENOTYPE</scope>
    <source>
        <strain>K12 / MC4100 / ATCC 35695 / DSM 6574</strain>
    </source>
</reference>
<reference key="5">
    <citation type="journal article" date="2017" name="Proc. Natl. Acad. Sci. U.S.A.">
        <title>Escherichia coli cytochrome c peroxidase is a respiratory oxidase that enables the use of hydrogen peroxide as a terminal electron acceptor.</title>
        <authorList>
            <person name="Khademian M."/>
            <person name="Imlay J.A."/>
        </authorList>
    </citation>
    <scope>FUNCTION AS A PEROXIDASE</scope>
    <scope>COFACTOR</scope>
    <scope>BIOPHYSICOCHEMICAL PROPERTIES</scope>
    <scope>INDUCTION</scope>
    <source>
        <strain>K12 / MC4100 / ATCC 35695 / DSM 6574</strain>
    </source>
</reference>
<reference key="6">
    <citation type="journal article" date="2018" name="Biochim. Biophys. Acta">
        <title>YhjA - An Escherichia coli trihemic enzyme with quinol peroxidase activity.</title>
        <authorList>
            <person name="Nobrega C.S."/>
            <person name="Devreese B."/>
            <person name="Pauleta S.R."/>
        </authorList>
    </citation>
    <scope>FUNCTION AS A PEROXIDASE</scope>
    <scope>COFACTOR</scope>
    <scope>ACTIVITY REGULATION</scope>
    <scope>BIOPHYSICOCHEMICAL PROPERTIES</scope>
    <scope>SUBUNIT</scope>
    <scope>DOMAIN</scope>
    <source>
        <strain>K12</strain>
    </source>
</reference>
<reference key="7">
    <citation type="journal article" date="2023" name="Molecules">
        <title>Coordination of the N-Terminal Heme in the Non-Classical Peroxidase from Escherichia coli.</title>
        <authorList>
            <person name="Oliveira R.N.S."/>
            <person name="de Aguiar S.R.M.M."/>
            <person name="Pauleta S.R."/>
        </authorList>
    </citation>
    <scope>COFACTOR</scope>
    <scope>DOMAIN</scope>
    <scope>MUTAGENESIS OF MET-82; MET-125 AND HIS-134</scope>
</reference>
<protein>
    <recommendedName>
        <fullName evidence="7">Cytochrome c peroxidase Ccp</fullName>
        <ecNumber evidence="4 5">1.11.1.-</ecNumber>
    </recommendedName>
    <alternativeName>
        <fullName evidence="8">Quinol peroxidase</fullName>
    </alternativeName>
</protein>
<gene>
    <name evidence="7" type="primary">ccp</name>
    <name type="synonym">yhjA</name>
    <name type="ordered locus">b3518</name>
    <name type="ordered locus">JW3486</name>
</gene>
<comment type="function">
    <text evidence="3 4 5">Cytochrome peroxidase that enables anaerobic respiration with H(2)O(2) as a terminal electron acceptor (PubMed:28696311). It receives electrons from the quinol pool (PubMed:28696311, PubMed:29550214). Menaquinol is probably the electron donor in vivo (PubMed:28696311, PubMed:29550214). It can use menadiol (a menaquinol analog), hydroquinone, duroquinol and the artificial electron donor ABTS(2-) in vitro, but only menadiol and hydroquinone can efficiently transfer electrons to Ccp, maintaining the catalytic activity of the enzyme (PubMed:29550214). It enables E.coli to grow on a nonfermentable carbon source when H(2)O(2) is supplied (PubMed:28696311). Plays a role in the peroxide stress response under anaerobic conditions (PubMed:17464064). However, it does not degrade H(2)O(2) quickly enough to lower the periplasmic H(2)O(2) level below that of the surrounding medium and protect the cell from its toxic effects (PubMed:28696311).</text>
</comment>
<comment type="cofactor">
    <cofactor evidence="5 6">
        <name>heme c</name>
        <dbReference type="ChEBI" id="CHEBI:61717"/>
    </cofactor>
    <text evidence="4 5">Binds 3 heme c groups covalently per subunit (PubMed:29550214). The P heme (heme c 2) is always high-spin 6-coordinated with a water-derived molecule as distal axial ligand (PubMed:29550214). The NT and E hemes are both His-Met 6-coordinated (PubMed:29550214). The Ccm pathway is probably the source of the c-type hemes (PubMed:28696311).</text>
</comment>
<comment type="activity regulation">
    <text evidence="5">Does not require reductive activation for maximum activity, as peroxidatic heme is high-spin His/OH(-) 6-coordinated (PubMed:29550214). Calcium ions are needed to attain maximum peroxidase activity (PubMed:29550214).</text>
</comment>
<comment type="biophysicochemical properties">
    <kinetics>
        <KM evidence="4">5.2 uM for H(2)O(2)</KM>
        <KM evidence="5">1.8 mM for menadiol (at 25 degrees Celsius and pH 7.5)</KM>
        <KM evidence="5">0.6 mM for hydroquinone (at 25 degrees Celsius and pH 7.5)</KM>
        <KM evidence="5">1.2 mM for duroquinol (at 25 degrees Celsius and pH 7.5)</KM>
        <KM evidence="5">3.7 mM for ABTS(2-) (at 25 degrees Celsius and pH 7.5)</KM>
        <text evidence="5">kcat is 13 sec(-1) with menadiol as substrate (PubMed:29550214). kcat is 19 sec(-1) with hydroquinone as substrate (PubMed:29550214). kcat is 12 sec(-1) with duroquinol as substrate (PubMed:29550214). kcat is 17 sec(-1) with ABTS(2-) as substrate (PubMed:29550214).</text>
    </kinetics>
    <phDependence>
        <text evidence="5">Optimum pH is 7.0.</text>
    </phDependence>
    <redoxPotential>
        <text>E(0) is -170 mV for P heme (active site), +133 mV for NT heme and +210 mV for E heme, at pH 7.5.</text>
    </redoxPotential>
</comment>
<comment type="subunit">
    <text evidence="5">The recombinant enzyme lacking its transmembrane domain is a monomer in solution.</text>
</comment>
<comment type="subcellular location">
    <subcellularLocation>
        <location evidence="10 11">Cell inner membrane</location>
        <topology evidence="1">Single-pass membrane protein</topology>
        <orientation evidence="9 10 11">Periplasmic side</orientation>
    </subcellularLocation>
</comment>
<comment type="induction">
    <text evidence="3 4">Expression is increased under anaerobic conditions (PubMed:17464064). Strong expression requires both the presence of H(2)O(2) and the absence of oxygen (PubMed:28696311). Expression is dependent on two transcription factors, OxyR and Fnr (PubMed:17464064, PubMed:28696311). The dual regulation by the OxyR and Fnr transcription factors ensures that ccp is expressed only if molecular oxygen is absent and H(2)O(2) is present (PubMed:28696311).</text>
</comment>
<comment type="domain">
    <text evidence="5 6">Is a non-classical bacterial peroxidase that contains three c-type heme binding motifs (-CXXCH-) (PubMed:29550214, PubMed:37375153). Contains a C-terminal domain (residues 171-465), which is homologous to the classical bacterial peroxidases and binds two hemes (P heme and E heme), and an additional N-terminal heme binding domain (residues 42-155), which binds one heme (NT heme) (PubMed:29550214, PubMed:37375153).</text>
</comment>
<comment type="disruption phenotype">
    <text evidence="3">Disruption of the gene leads to increased sensitivity to exogenous peroxides.</text>
</comment>
<proteinExistence type="evidence at protein level"/>
<organism>
    <name type="scientific">Escherichia coli (strain K12)</name>
    <dbReference type="NCBI Taxonomy" id="83333"/>
    <lineage>
        <taxon>Bacteria</taxon>
        <taxon>Pseudomonadati</taxon>
        <taxon>Pseudomonadota</taxon>
        <taxon>Gammaproteobacteria</taxon>
        <taxon>Enterobacterales</taxon>
        <taxon>Enterobacteriaceae</taxon>
        <taxon>Escherichia</taxon>
    </lineage>
</organism>
<keyword id="KW-0997">Cell inner membrane</keyword>
<keyword id="KW-1003">Cell membrane</keyword>
<keyword id="KW-0249">Electron transport</keyword>
<keyword id="KW-0349">Heme</keyword>
<keyword id="KW-0408">Iron</keyword>
<keyword id="KW-0472">Membrane</keyword>
<keyword id="KW-0479">Metal-binding</keyword>
<keyword id="KW-0560">Oxidoreductase</keyword>
<keyword id="KW-0575">Peroxidase</keyword>
<keyword id="KW-1185">Reference proteome</keyword>
<keyword id="KW-0812">Transmembrane</keyword>
<keyword id="KW-1133">Transmembrane helix</keyword>
<keyword id="KW-0813">Transport</keyword>
<name>CCP_ECOLI</name>
<sequence length="465" mass="51571">MKMVSRITAIGLAGVAICYLGLSGYVWYHDNKRSKQADVQASAVSENNKVLGFLREKGCDYCHTPSAELPAYYYIPGAKQLMDYDIKLGYKSFNLEAVRAALLADKPVSQSDLNKIEWVMQYETMPPTRYTALHWAGKVSDEERAEILAWIAKQRAEYYASNDTAPEHRNEPVQPIPQKLPTDAQKVALGFALYHDPRLSADSTISCAHCHALNAGGVDGRKTSIGVGGAVGPINAPTVFNSVFNVEQFWDGRAATLQDQAGGPPLNPIEMASKSWDEIIAKLEKDPQLKTQFLEVYPQGFSGENITDAIAEFEKTLITPDSPFDKWLRGDENALTAQQKKGYQLFKDNKCATCHGGIILGGRSFEPLGLKKDFNFGEITAADIGRMNVTKEERDKLRQKVPGLRNVALTAPYFHRGDVPTLDGAVKLMLRYQVGKELPQEDVDDIVAFLHSLNGVYTPYMQDKQ</sequence>
<dbReference type="EC" id="1.11.1.-" evidence="4 5"/>
<dbReference type="EMBL" id="U00039">
    <property type="protein sequence ID" value="AAB18494.1"/>
    <property type="molecule type" value="Genomic_DNA"/>
</dbReference>
<dbReference type="EMBL" id="U00096">
    <property type="protein sequence ID" value="AAC76543.1"/>
    <property type="molecule type" value="Genomic_DNA"/>
</dbReference>
<dbReference type="EMBL" id="AP009048">
    <property type="protein sequence ID" value="BAE77776.1"/>
    <property type="molecule type" value="Genomic_DNA"/>
</dbReference>
<dbReference type="PIR" id="S47738">
    <property type="entry name" value="S47738"/>
</dbReference>
<dbReference type="RefSeq" id="NP_417975.1">
    <property type="nucleotide sequence ID" value="NC_000913.3"/>
</dbReference>
<dbReference type="SMR" id="P37197"/>
<dbReference type="BioGRID" id="4262525">
    <property type="interactions" value="17"/>
</dbReference>
<dbReference type="FunCoup" id="P37197">
    <property type="interactions" value="284"/>
</dbReference>
<dbReference type="IntAct" id="P37197">
    <property type="interactions" value="2"/>
</dbReference>
<dbReference type="STRING" id="511145.b3518"/>
<dbReference type="jPOST" id="P37197"/>
<dbReference type="PaxDb" id="511145-b3518"/>
<dbReference type="EnsemblBacteria" id="AAC76543">
    <property type="protein sequence ID" value="AAC76543"/>
    <property type="gene ID" value="b3518"/>
</dbReference>
<dbReference type="GeneID" id="948038"/>
<dbReference type="KEGG" id="ecj:JW3486"/>
<dbReference type="KEGG" id="eco:b3518"/>
<dbReference type="KEGG" id="ecoc:C3026_19060"/>
<dbReference type="PATRIC" id="fig|1411691.4.peg.3200"/>
<dbReference type="EchoBASE" id="EB2155"/>
<dbReference type="eggNOG" id="COG1858">
    <property type="taxonomic scope" value="Bacteria"/>
</dbReference>
<dbReference type="HOGENOM" id="CLU_034652_2_0_6"/>
<dbReference type="InParanoid" id="P37197"/>
<dbReference type="OMA" id="EMGSHDW"/>
<dbReference type="OrthoDB" id="9805202at2"/>
<dbReference type="PhylomeDB" id="P37197"/>
<dbReference type="BioCyc" id="EcoCyc:EG12244-MONOMER"/>
<dbReference type="BioCyc" id="MetaCyc:EG12244-MONOMER"/>
<dbReference type="PRO" id="PR:P37197"/>
<dbReference type="Proteomes" id="UP000000625">
    <property type="component" value="Chromosome"/>
</dbReference>
<dbReference type="GO" id="GO:0004130">
    <property type="term" value="F:cytochrome-c peroxidase activity"/>
    <property type="evidence" value="ECO:0000314"/>
    <property type="project" value="EcoCyc"/>
</dbReference>
<dbReference type="GO" id="GO:0009055">
    <property type="term" value="F:electron transfer activity"/>
    <property type="evidence" value="ECO:0007669"/>
    <property type="project" value="InterPro"/>
</dbReference>
<dbReference type="GO" id="GO:0020037">
    <property type="term" value="F:heme binding"/>
    <property type="evidence" value="ECO:0000314"/>
    <property type="project" value="EcoCyc"/>
</dbReference>
<dbReference type="GO" id="GO:0046872">
    <property type="term" value="F:metal ion binding"/>
    <property type="evidence" value="ECO:0007669"/>
    <property type="project" value="UniProtKB-KW"/>
</dbReference>
<dbReference type="GO" id="GO:0019645">
    <property type="term" value="P:anaerobic electron transport chain"/>
    <property type="evidence" value="ECO:0000314"/>
    <property type="project" value="EcoCyc"/>
</dbReference>
<dbReference type="GO" id="GO:0042743">
    <property type="term" value="P:hydrogen peroxide metabolic process"/>
    <property type="evidence" value="ECO:0000315"/>
    <property type="project" value="EcoCyc"/>
</dbReference>
<dbReference type="GO" id="GO:0042542">
    <property type="term" value="P:response to hydrogen peroxide"/>
    <property type="evidence" value="ECO:0000315"/>
    <property type="project" value="EcoCyc"/>
</dbReference>
<dbReference type="FunFam" id="1.10.760.10:FF:000004">
    <property type="entry name" value="Cytochrome c peroxidase"/>
    <property type="match status" value="1"/>
</dbReference>
<dbReference type="FunFam" id="1.10.760.10:FF:000007">
    <property type="entry name" value="Cytochrome c peroxidase"/>
    <property type="match status" value="1"/>
</dbReference>
<dbReference type="Gene3D" id="1.10.760.10">
    <property type="entry name" value="Cytochrome c-like domain"/>
    <property type="match status" value="2"/>
</dbReference>
<dbReference type="InterPro" id="IPR009056">
    <property type="entry name" value="Cyt_c-like_dom"/>
</dbReference>
<dbReference type="InterPro" id="IPR036909">
    <property type="entry name" value="Cyt_c-like_dom_sf"/>
</dbReference>
<dbReference type="InterPro" id="IPR051395">
    <property type="entry name" value="Cytochrome_c_Peroxidase/MauG"/>
</dbReference>
<dbReference type="InterPro" id="IPR004852">
    <property type="entry name" value="Di-haem_cyt_c_peroxidsae"/>
</dbReference>
<dbReference type="InterPro" id="IPR025992">
    <property type="entry name" value="Haem-bd"/>
</dbReference>
<dbReference type="PANTHER" id="PTHR30600">
    <property type="entry name" value="CYTOCHROME C PEROXIDASE-RELATED"/>
    <property type="match status" value="1"/>
</dbReference>
<dbReference type="PANTHER" id="PTHR30600:SF7">
    <property type="entry name" value="CYTOCHROME C PEROXIDASE-RELATED"/>
    <property type="match status" value="1"/>
</dbReference>
<dbReference type="Pfam" id="PF03150">
    <property type="entry name" value="CCP_MauG"/>
    <property type="match status" value="1"/>
</dbReference>
<dbReference type="Pfam" id="PF00034">
    <property type="entry name" value="Cytochrom_C"/>
    <property type="match status" value="1"/>
</dbReference>
<dbReference type="Pfam" id="PF14376">
    <property type="entry name" value="Haem_bd"/>
    <property type="match status" value="1"/>
</dbReference>
<dbReference type="SMART" id="SM01235">
    <property type="entry name" value="Haem_bd"/>
    <property type="match status" value="1"/>
</dbReference>
<dbReference type="SUPFAM" id="SSF46626">
    <property type="entry name" value="Cytochrome c"/>
    <property type="match status" value="2"/>
</dbReference>
<dbReference type="PROSITE" id="PS51007">
    <property type="entry name" value="CYTC"/>
    <property type="match status" value="3"/>
</dbReference>